<geneLocation type="chloroplast"/>
<feature type="chain" id="PRO_0000216388" description="Cytochrome b6-f complex subunit 5">
    <location>
        <begin position="1"/>
        <end position="37"/>
    </location>
</feature>
<feature type="transmembrane region" description="Helical" evidence="1">
    <location>
        <begin position="5"/>
        <end position="25"/>
    </location>
</feature>
<name>PETG_MARPO</name>
<evidence type="ECO:0000255" key="1">
    <source>
        <dbReference type="HAMAP-Rule" id="MF_00432"/>
    </source>
</evidence>
<sequence length="37" mass="4076">MVEALLSGIVLGLIPITLLGLFVTAYLQYRRGDQLDL</sequence>
<proteinExistence type="inferred from homology"/>
<keyword id="KW-0150">Chloroplast</keyword>
<keyword id="KW-0249">Electron transport</keyword>
<keyword id="KW-0472">Membrane</keyword>
<keyword id="KW-0602">Photosynthesis</keyword>
<keyword id="KW-0934">Plastid</keyword>
<keyword id="KW-0793">Thylakoid</keyword>
<keyword id="KW-0812">Transmembrane</keyword>
<keyword id="KW-1133">Transmembrane helix</keyword>
<keyword id="KW-0813">Transport</keyword>
<reference key="1">
    <citation type="journal article" date="1988" name="J. Mol. Biol.">
        <title>Structure and organization of Marchantia polymorpha chloroplast genome. III. Gene organization of the large single copy region from rbcL to trnI(CAU).</title>
        <authorList>
            <person name="Fukuzawa H."/>
            <person name="Kohchi T."/>
            <person name="Sano T."/>
            <person name="Shirai H."/>
            <person name="Umesono K."/>
            <person name="Inokuchi H."/>
            <person name="Ozeki H."/>
            <person name="Ohyama K."/>
        </authorList>
    </citation>
    <scope>NUCLEOTIDE SEQUENCE [GENOMIC DNA]</scope>
</reference>
<reference key="2">
    <citation type="journal article" date="1986" name="Nature">
        <title>Chloroplast gene organization deduced from complete sequence of liverwort Marchantia polymorpha chloroplast DNA.</title>
        <authorList>
            <person name="Ohyama K."/>
            <person name="Fukuzawa H."/>
            <person name="Kohchi T."/>
            <person name="Shirai H."/>
            <person name="Sano T."/>
            <person name="Sano S."/>
            <person name="Umesono K."/>
            <person name="Shiki Y."/>
            <person name="Takeuchi M."/>
            <person name="Chang Z."/>
            <person name="Aota S."/>
            <person name="Inokuchi H."/>
            <person name="Ozeki H."/>
        </authorList>
    </citation>
    <scope>NUCLEOTIDE SEQUENCE [LARGE SCALE GENOMIC DNA]</scope>
</reference>
<dbReference type="EMBL" id="X04465">
    <property type="protein sequence ID" value="CAA28104.1"/>
    <property type="molecule type" value="Genomic_DNA"/>
</dbReference>
<dbReference type="PIR" id="S01541">
    <property type="entry name" value="A05054"/>
</dbReference>
<dbReference type="RefSeq" id="NP_039318.1">
    <property type="nucleotide sequence ID" value="NC_001319.1"/>
</dbReference>
<dbReference type="RefSeq" id="YP_009646832.1">
    <property type="nucleotide sequence ID" value="NC_042505.1"/>
</dbReference>
<dbReference type="SMR" id="P12120"/>
<dbReference type="GeneID" id="2702604"/>
<dbReference type="GeneID" id="40386756"/>
<dbReference type="GO" id="GO:0009535">
    <property type="term" value="C:chloroplast thylakoid membrane"/>
    <property type="evidence" value="ECO:0007669"/>
    <property type="project" value="UniProtKB-SubCell"/>
</dbReference>
<dbReference type="GO" id="GO:0009512">
    <property type="term" value="C:cytochrome b6f complex"/>
    <property type="evidence" value="ECO:0007669"/>
    <property type="project" value="InterPro"/>
</dbReference>
<dbReference type="GO" id="GO:0045158">
    <property type="term" value="F:electron transporter, transferring electrons within cytochrome b6/f complex of photosystem II activity"/>
    <property type="evidence" value="ECO:0007669"/>
    <property type="project" value="UniProtKB-UniRule"/>
</dbReference>
<dbReference type="GO" id="GO:0017004">
    <property type="term" value="P:cytochrome complex assembly"/>
    <property type="evidence" value="ECO:0007669"/>
    <property type="project" value="UniProtKB-UniRule"/>
</dbReference>
<dbReference type="GO" id="GO:0015979">
    <property type="term" value="P:photosynthesis"/>
    <property type="evidence" value="ECO:0007669"/>
    <property type="project" value="UniProtKB-KW"/>
</dbReference>
<dbReference type="HAMAP" id="MF_00432">
    <property type="entry name" value="Cytb6_f_PetG"/>
    <property type="match status" value="1"/>
</dbReference>
<dbReference type="InterPro" id="IPR003683">
    <property type="entry name" value="Cyt_6/f_cplx_su5"/>
</dbReference>
<dbReference type="InterPro" id="IPR036099">
    <property type="entry name" value="Cyt_6/f_cplx_su5_sf"/>
</dbReference>
<dbReference type="NCBIfam" id="NF001907">
    <property type="entry name" value="PRK00665.1"/>
    <property type="match status" value="1"/>
</dbReference>
<dbReference type="Pfam" id="PF02529">
    <property type="entry name" value="PetG"/>
    <property type="match status" value="1"/>
</dbReference>
<dbReference type="PIRSF" id="PIRSF000034">
    <property type="entry name" value="Cyt_b6-f_V"/>
    <property type="match status" value="1"/>
</dbReference>
<dbReference type="SUPFAM" id="SSF103446">
    <property type="entry name" value="PetG subunit of the cytochrome b6f complex"/>
    <property type="match status" value="1"/>
</dbReference>
<comment type="function">
    <text evidence="1">Component of the cytochrome b6-f complex, which mediates electron transfer between photosystem II (PSII) and photosystem I (PSI), cyclic electron flow around PSI, and state transitions. PetG is required for either the stability or assembly of the cytochrome b6-f complex.</text>
</comment>
<comment type="subunit">
    <text evidence="1">The 4 large subunits of the cytochrome b6-f complex are cytochrome b6, subunit IV (17 kDa polypeptide, PetD), cytochrome f and the Rieske protein, while the 4 small subunits are PetG, PetL, PetM and PetN. The complex functions as a dimer.</text>
</comment>
<comment type="subcellular location">
    <subcellularLocation>
        <location evidence="1">Plastid</location>
        <location evidence="1">Chloroplast thylakoid membrane</location>
        <topology evidence="1">Single-pass membrane protein</topology>
    </subcellularLocation>
</comment>
<comment type="similarity">
    <text evidence="1">Belongs to the PetG family.</text>
</comment>
<protein>
    <recommendedName>
        <fullName evidence="1">Cytochrome b6-f complex subunit 5</fullName>
    </recommendedName>
    <alternativeName>
        <fullName evidence="1">Cytochrome b6-f complex subunit PetG</fullName>
    </alternativeName>
    <alternativeName>
        <fullName evidence="1">Cytochrome b6-f complex subunit V</fullName>
    </alternativeName>
</protein>
<accession>P12120</accession>
<organism>
    <name type="scientific">Marchantia polymorpha</name>
    <name type="common">Common liverwort</name>
    <name type="synonym">Marchantia aquatica</name>
    <dbReference type="NCBI Taxonomy" id="3197"/>
    <lineage>
        <taxon>Eukaryota</taxon>
        <taxon>Viridiplantae</taxon>
        <taxon>Streptophyta</taxon>
        <taxon>Embryophyta</taxon>
        <taxon>Marchantiophyta</taxon>
        <taxon>Marchantiopsida</taxon>
        <taxon>Marchantiidae</taxon>
        <taxon>Marchantiales</taxon>
        <taxon>Marchantiaceae</taxon>
        <taxon>Marchantia</taxon>
    </lineage>
</organism>
<gene>
    <name evidence="1" type="primary">petG</name>
</gene>